<keyword id="KW-0067">ATP-binding</keyword>
<keyword id="KW-0131">Cell cycle</keyword>
<keyword id="KW-0132">Cell division</keyword>
<keyword id="KW-0547">Nucleotide-binding</keyword>
<keyword id="KW-1185">Reference proteome</keyword>
<keyword id="KW-0808">Transferase</keyword>
<keyword id="KW-0833">Ubl conjugation pathway</keyword>
<comment type="function">
    <text evidence="1">Catalyzes the covalent attachment of ubiquitin to other proteins. Acts as an essential factor of the anaphase promoting complex/cyclosome (APC/C), a cell cycle-regulated ubiquitin ligase that controls progression through mitosis. Acts by specifically elongating polyubiquitin chains initiated by the E2 enzyme vih/UbcH10 on APC/C substrates, enhancing the degradation of APC/C substrates by the proteasome and promoting mitotic exit.</text>
</comment>
<comment type="catalytic activity">
    <reaction evidence="1 2">
        <text>S-ubiquitinyl-[E1 ubiquitin-activating enzyme]-L-cysteine + [E2 ubiquitin-conjugating enzyme]-L-cysteine = [E1 ubiquitin-activating enzyme]-L-cysteine + S-ubiquitinyl-[E2 ubiquitin-conjugating enzyme]-L-cysteine.</text>
        <dbReference type="EC" id="2.3.2.23"/>
    </reaction>
</comment>
<comment type="pathway">
    <text evidence="1">Protein modification; protein ubiquitination.</text>
</comment>
<comment type="similarity">
    <text evidence="1">Belongs to the ubiquitin-conjugating enzyme family.</text>
</comment>
<protein>
    <recommendedName>
        <fullName>Ubiquitin-conjugating enzyme E2 S</fullName>
        <ecNumber>2.3.2.23</ecNumber>
    </recommendedName>
    <alternativeName>
        <fullName>E2 ubiquitin-conjugating enzyme S</fullName>
    </alternativeName>
    <alternativeName>
        <fullName>Ubiquitin carrier protein S</fullName>
    </alternativeName>
    <alternativeName>
        <fullName>Ubiquitin-protein ligase S</fullName>
    </alternativeName>
</protein>
<evidence type="ECO:0000255" key="1">
    <source>
        <dbReference type="PROSITE-ProRule" id="PRU00388"/>
    </source>
</evidence>
<evidence type="ECO:0000255" key="2">
    <source>
        <dbReference type="PROSITE-ProRule" id="PRU10133"/>
    </source>
</evidence>
<evidence type="ECO:0000256" key="3">
    <source>
        <dbReference type="SAM" id="MobiDB-lite"/>
    </source>
</evidence>
<sequence>MSSQYSNVENLSPQTIRQVMRELQEMETTPPEGIKVLINESDVTDIQALIDGPAGTPYAAGIFRVKLTLNKDFPQTPPKAYFLTKIFHPNVAANGEICVNTLKKDWKPDLGIKHILLTIKCLLIVPNPESALNEEAGKMLLERYDDYSQRARMMTEIHAQPAKCAAGAAGDSKDDDGPSTKKHAGLDKKLQDKKKEKLLKEKKRMLKRL</sequence>
<feature type="chain" id="PRO_0000390437" description="Ubiquitin-conjugating enzyme E2 S">
    <location>
        <begin position="1"/>
        <end position="209"/>
    </location>
</feature>
<feature type="domain" description="UBC core" evidence="1">
    <location>
        <begin position="14"/>
        <end position="160"/>
    </location>
</feature>
<feature type="region of interest" description="Disordered" evidence="3">
    <location>
        <begin position="164"/>
        <end position="209"/>
    </location>
</feature>
<feature type="compositionally biased region" description="Basic and acidic residues" evidence="3">
    <location>
        <begin position="171"/>
        <end position="199"/>
    </location>
</feature>
<feature type="compositionally biased region" description="Basic residues" evidence="3">
    <location>
        <begin position="200"/>
        <end position="209"/>
    </location>
</feature>
<feature type="active site" description="Glycyl thioester intermediate" evidence="1 2">
    <location>
        <position position="98"/>
    </location>
</feature>
<organism>
    <name type="scientific">Drosophila ananassae</name>
    <name type="common">Fruit fly</name>
    <dbReference type="NCBI Taxonomy" id="7217"/>
    <lineage>
        <taxon>Eukaryota</taxon>
        <taxon>Metazoa</taxon>
        <taxon>Ecdysozoa</taxon>
        <taxon>Arthropoda</taxon>
        <taxon>Hexapoda</taxon>
        <taxon>Insecta</taxon>
        <taxon>Pterygota</taxon>
        <taxon>Neoptera</taxon>
        <taxon>Endopterygota</taxon>
        <taxon>Diptera</taxon>
        <taxon>Brachycera</taxon>
        <taxon>Muscomorpha</taxon>
        <taxon>Ephydroidea</taxon>
        <taxon>Drosophilidae</taxon>
        <taxon>Drosophila</taxon>
        <taxon>Sophophora</taxon>
    </lineage>
</organism>
<reference key="1">
    <citation type="journal article" date="2007" name="Nature">
        <title>Evolution of genes and genomes on the Drosophila phylogeny.</title>
        <authorList>
            <consortium name="Drosophila 12 genomes consortium"/>
        </authorList>
    </citation>
    <scope>NUCLEOTIDE SEQUENCE [LARGE SCALE GENOMIC DNA]</scope>
    <source>
        <strain>Tucson 14024-0371.13</strain>
    </source>
</reference>
<gene>
    <name type="ORF">GF21161</name>
</gene>
<accession>B3MQV3</accession>
<dbReference type="EC" id="2.3.2.23"/>
<dbReference type="EMBL" id="CH902622">
    <property type="protein sequence ID" value="EDV34158.1"/>
    <property type="molecule type" value="Genomic_DNA"/>
</dbReference>
<dbReference type="SMR" id="B3MQV3"/>
<dbReference type="FunCoup" id="B3MQV3">
    <property type="interactions" value="1947"/>
</dbReference>
<dbReference type="STRING" id="7217.B3MQV3"/>
<dbReference type="EnsemblMetazoa" id="FBtr0125861">
    <property type="protein sequence ID" value="FBpp0124353"/>
    <property type="gene ID" value="FBgn0098164"/>
</dbReference>
<dbReference type="EnsemblMetazoa" id="XM_001963673.4">
    <property type="protein sequence ID" value="XP_001963709.1"/>
    <property type="gene ID" value="LOC6503846"/>
</dbReference>
<dbReference type="GeneID" id="6503846"/>
<dbReference type="KEGG" id="dan:6503846"/>
<dbReference type="eggNOG" id="KOG0423">
    <property type="taxonomic scope" value="Eukaryota"/>
</dbReference>
<dbReference type="HOGENOM" id="CLU_030988_5_3_1"/>
<dbReference type="InParanoid" id="B3MQV3"/>
<dbReference type="OMA" id="QPAKCGA"/>
<dbReference type="OrthoDB" id="10069349at2759"/>
<dbReference type="PhylomeDB" id="B3MQV3"/>
<dbReference type="UniPathway" id="UPA00143"/>
<dbReference type="Proteomes" id="UP000007801">
    <property type="component" value="Unassembled WGS sequence"/>
</dbReference>
<dbReference type="GO" id="GO:0005524">
    <property type="term" value="F:ATP binding"/>
    <property type="evidence" value="ECO:0007669"/>
    <property type="project" value="UniProtKB-KW"/>
</dbReference>
<dbReference type="GO" id="GO:0061631">
    <property type="term" value="F:ubiquitin conjugating enzyme activity"/>
    <property type="evidence" value="ECO:0007669"/>
    <property type="project" value="UniProtKB-EC"/>
</dbReference>
<dbReference type="GO" id="GO:0031145">
    <property type="term" value="P:anaphase-promoting complex-dependent catabolic process"/>
    <property type="evidence" value="ECO:0000250"/>
    <property type="project" value="UniProtKB"/>
</dbReference>
<dbReference type="GO" id="GO:0051301">
    <property type="term" value="P:cell division"/>
    <property type="evidence" value="ECO:0007669"/>
    <property type="project" value="UniProtKB-KW"/>
</dbReference>
<dbReference type="GO" id="GO:0010458">
    <property type="term" value="P:exit from mitosis"/>
    <property type="evidence" value="ECO:0000250"/>
    <property type="project" value="UniProtKB"/>
</dbReference>
<dbReference type="GO" id="GO:0016567">
    <property type="term" value="P:protein ubiquitination"/>
    <property type="evidence" value="ECO:0007669"/>
    <property type="project" value="UniProtKB-UniPathway"/>
</dbReference>
<dbReference type="CDD" id="cd23804">
    <property type="entry name" value="UBCc_UBE2S"/>
    <property type="match status" value="1"/>
</dbReference>
<dbReference type="FunFam" id="3.10.110.10:FF:000034">
    <property type="entry name" value="Ubiquitin-conjugating enzyme E2 S"/>
    <property type="match status" value="1"/>
</dbReference>
<dbReference type="Gene3D" id="3.10.110.10">
    <property type="entry name" value="Ubiquitin Conjugating Enzyme"/>
    <property type="match status" value="1"/>
</dbReference>
<dbReference type="InterPro" id="IPR050113">
    <property type="entry name" value="Ub_conjugating_enzyme"/>
</dbReference>
<dbReference type="InterPro" id="IPR000608">
    <property type="entry name" value="UBQ-conjugat_E2_core"/>
</dbReference>
<dbReference type="InterPro" id="IPR023313">
    <property type="entry name" value="UBQ-conjugating_AS"/>
</dbReference>
<dbReference type="InterPro" id="IPR016135">
    <property type="entry name" value="UBQ-conjugating_enzyme/RWD"/>
</dbReference>
<dbReference type="PANTHER" id="PTHR24067">
    <property type="entry name" value="UBIQUITIN-CONJUGATING ENZYME E2"/>
    <property type="match status" value="1"/>
</dbReference>
<dbReference type="Pfam" id="PF00179">
    <property type="entry name" value="UQ_con"/>
    <property type="match status" value="1"/>
</dbReference>
<dbReference type="SMART" id="SM00212">
    <property type="entry name" value="UBCc"/>
    <property type="match status" value="1"/>
</dbReference>
<dbReference type="SUPFAM" id="SSF54495">
    <property type="entry name" value="UBC-like"/>
    <property type="match status" value="1"/>
</dbReference>
<dbReference type="PROSITE" id="PS00183">
    <property type="entry name" value="UBC_1"/>
    <property type="match status" value="1"/>
</dbReference>
<dbReference type="PROSITE" id="PS50127">
    <property type="entry name" value="UBC_2"/>
    <property type="match status" value="1"/>
</dbReference>
<name>UBE2S_DROAN</name>
<proteinExistence type="inferred from homology"/>